<sequence length="1303" mass="147741">MTVVPGETQCEEAQPAANGSSSPVLLQPFRRPRTDSRSRLDSGSNNTTLSEDCARKSILRTLKSLGVEIDESASFEAIIDSGGIEKLADFWRKRDSSSEIAFQGLLSVLEYCLQHSFDTNEFFEKFVNALGYHTVQFWRAGVPYVFDSDMSHGTKYRDALLFSLTLYDVNTGKSRLKELYAAVPGIRKSLLGVHAKRFGEQYHHLQRRRSVSSRGGSLRGSMDSLNDSGQNGAEDVIGVEDEEEAQKFRGKRTSISLDPAAAGEVMFTIEDGACFPSGGLANTHFQQRVINVSNAPPVSLKREKSGEWEIKQGSGGLVSCVDPIMSVNQENMWLANLGMNIDKKKMLRYDDCLRSQEHTLENMRSTELLNVTDDSAPLAPATNTLGLPLMRQALADVLFHVIADDDIKEQNEDEQSRNVREEMSLLGVLNQYNRSNYKLNPVVVQEQDYNVYYGGISNGLLWPALHNLPEYIVADYDDPKVLYEHWCAYVRVNYQFAIDAVRNSRPQDFIWIHDYHLMLTGMIMQSLDSSLEIGFFLHIPFLPPDNFFTKYRLCAFPIMRGLLRFTKVGFQTHRDRAKFVELVGIHLPTARVTYDEKMDIHTVTYQGWSCSLGVFPVSIKNEDFLKVAQSAETIKKADDIRKEILGETPVDSARLLFSVERFDYTKGIKEKLLAYRRYFERHPDRIGKDVLYQVAVTNRRSVDTYRMYQDECIQMAEDINKEFATDEYPNWKPLIFRTDGLQRADLVAHYLAMDVGVVTPKKDGMNLVAKEMLVCNPSAGLVLSTGAGSEIQFTMAGLHPDDGDKCYHRVVDVYDADHYADAFYEAAVEPEAERAAHGQRLNEFIMNNDIERWSTAFLDPGWSHLVIRQSEIKDLDDFYSLMMRTRDVRRQIVERVLKGIPIRSHFSISLSNAKESLLLACQPGTRTLHLKPSLEEDEQTEPAHFDIANELDEFEKDLNFMKFIQSDDVYNVEQFINSLQEYHPVSADKFRDEVIELGDMLTEADHFNFFFTDRDGTLKSYSCSYPASIQPAYSGVIQAQFARRCAQTCAIVTTAPLMRIGVLDVSTIPEGYYYFGASAGREWFIDPANKFKDQSIPEEDLELLERVFAAISDLLEEPKFKHFTWVGSGLQKHYGHITIAHQDAFNSVPRHQVRAIDQKIKDIIHRIDPDQHTLKVKETETDIKIFLKSESGEIFDKGQGIRLLVEHMKCDISNGTILVCGDSSTDLPMLQACLEANPSGVYTVWVTRSDELKTTVRELCERFGNKNFVFVSCPEVLLGGMAQATIREISIGRPGPRASHDSE</sequence>
<dbReference type="EC" id="2.4.1.15"/>
<dbReference type="EMBL" id="AJ811571">
    <property type="protein sequence ID" value="CAH18870.1"/>
    <property type="molecule type" value="mRNA"/>
</dbReference>
<dbReference type="EMBL" id="AJ811570">
    <property type="protein sequence ID" value="CAH18869.1"/>
    <property type="molecule type" value="mRNA"/>
</dbReference>
<dbReference type="EMBL" id="AJ811572">
    <property type="protein sequence ID" value="CAH18871.1"/>
    <property type="molecule type" value="mRNA"/>
</dbReference>
<dbReference type="SMR" id="Q5K2C1"/>
<dbReference type="CAZy" id="GT20">
    <property type="family name" value="Glycosyltransferase Family 20"/>
</dbReference>
<dbReference type="GO" id="GO:0005829">
    <property type="term" value="C:cytosol"/>
    <property type="evidence" value="ECO:0007669"/>
    <property type="project" value="TreeGrafter"/>
</dbReference>
<dbReference type="GO" id="GO:0003825">
    <property type="term" value="F:alpha,alpha-trehalose-phosphate synthase (UDP-forming) activity"/>
    <property type="evidence" value="ECO:0007669"/>
    <property type="project" value="UniProtKB-EC"/>
</dbReference>
<dbReference type="GO" id="GO:0004805">
    <property type="term" value="F:trehalose-phosphatase activity"/>
    <property type="evidence" value="ECO:0007669"/>
    <property type="project" value="TreeGrafter"/>
</dbReference>
<dbReference type="GO" id="GO:0005992">
    <property type="term" value="P:trehalose biosynthetic process"/>
    <property type="evidence" value="ECO:0007669"/>
    <property type="project" value="InterPro"/>
</dbReference>
<dbReference type="CDD" id="cd03788">
    <property type="entry name" value="GT20_TPS"/>
    <property type="match status" value="1"/>
</dbReference>
<dbReference type="FunFam" id="3.40.50.2000:FF:000206">
    <property type="entry name" value="Trehalose-6-phosphate synthase"/>
    <property type="match status" value="1"/>
</dbReference>
<dbReference type="Gene3D" id="1.20.58.1800">
    <property type="match status" value="1"/>
</dbReference>
<dbReference type="Gene3D" id="3.30.70.3080">
    <property type="match status" value="1"/>
</dbReference>
<dbReference type="Gene3D" id="3.40.50.2000">
    <property type="entry name" value="Glycogen Phosphorylase B"/>
    <property type="match status" value="3"/>
</dbReference>
<dbReference type="Gene3D" id="3.40.50.1000">
    <property type="entry name" value="HAD superfamily/HAD-like"/>
    <property type="match status" value="1"/>
</dbReference>
<dbReference type="InterPro" id="IPR001830">
    <property type="entry name" value="Glyco_trans_20"/>
</dbReference>
<dbReference type="InterPro" id="IPR036412">
    <property type="entry name" value="HAD-like_sf"/>
</dbReference>
<dbReference type="InterPro" id="IPR023214">
    <property type="entry name" value="HAD_sf"/>
</dbReference>
<dbReference type="InterPro" id="IPR049063">
    <property type="entry name" value="T6PP_C"/>
</dbReference>
<dbReference type="InterPro" id="IPR041064">
    <property type="entry name" value="T6PP_helical"/>
</dbReference>
<dbReference type="PANTHER" id="PTHR10788:SF110">
    <property type="entry name" value="ALPHA,ALPHA-TREHALOSE-PHOSPHATE SYNTHASE [UDP-FORMING] 2"/>
    <property type="match status" value="1"/>
</dbReference>
<dbReference type="PANTHER" id="PTHR10788">
    <property type="entry name" value="TREHALOSE-6-PHOSPHATE SYNTHASE"/>
    <property type="match status" value="1"/>
</dbReference>
<dbReference type="Pfam" id="PF00982">
    <property type="entry name" value="Glyco_transf_20"/>
    <property type="match status" value="1"/>
</dbReference>
<dbReference type="Pfam" id="PF21141">
    <property type="entry name" value="T6PP_C"/>
    <property type="match status" value="1"/>
</dbReference>
<dbReference type="Pfam" id="PF18572">
    <property type="entry name" value="T6PP_N"/>
    <property type="match status" value="1"/>
</dbReference>
<dbReference type="SUPFAM" id="SSF56784">
    <property type="entry name" value="HAD-like"/>
    <property type="match status" value="1"/>
</dbReference>
<dbReference type="SUPFAM" id="SSF53756">
    <property type="entry name" value="UDP-Glycosyltransferase/glycogen phosphorylase"/>
    <property type="match status" value="1"/>
</dbReference>
<evidence type="ECO:0000250" key="1"/>
<evidence type="ECO:0000256" key="2">
    <source>
        <dbReference type="SAM" id="MobiDB-lite"/>
    </source>
</evidence>
<evidence type="ECO:0000303" key="3">
    <source>
    </source>
</evidence>
<evidence type="ECO:0000305" key="4"/>
<protein>
    <recommendedName>
        <fullName>Alpha,alpha-trehalose-phosphate synthase [UDP-forming] 2</fullName>
        <ecNumber>2.4.1.15</ecNumber>
    </recommendedName>
    <alternativeName>
        <fullName>Trehalose-6-phosphate synthase 2</fullName>
    </alternativeName>
    <alternativeName>
        <fullName>UDP-glucose-glucosephosphate glucosyltransferase 2</fullName>
    </alternativeName>
</protein>
<accession>Q5K2C1</accession>
<accession>Q5K2C0</accession>
<accession>Q5K2C2</accession>
<gene>
    <name type="primary">tps-2</name>
</gene>
<feature type="chain" id="PRO_0000385174" description="Alpha,alpha-trehalose-phosphate synthase [UDP-forming] 2">
    <location>
        <begin position="1"/>
        <end position="1303"/>
    </location>
</feature>
<feature type="region of interest" description="Disordered" evidence="2">
    <location>
        <begin position="1"/>
        <end position="48"/>
    </location>
</feature>
<feature type="region of interest" description="Disordered" evidence="2">
    <location>
        <begin position="205"/>
        <end position="251"/>
    </location>
</feature>
<feature type="compositionally biased region" description="Low complexity" evidence="2">
    <location>
        <begin position="212"/>
        <end position="221"/>
    </location>
</feature>
<feature type="splice variant" id="VSP_038110" description="In isoform b." evidence="3">
    <location>
        <begin position="349"/>
        <end position="364"/>
    </location>
</feature>
<feature type="splice variant" id="VSP_038111" description="In isoform b." evidence="3">
    <original>R</original>
    <variation>RWGHSSAGEAGVEPSQPW</variation>
    <location>
        <position position="420"/>
    </location>
</feature>
<feature type="sequence conflict" description="In Ref. 1; CAH18871." evidence="4" ref="1">
    <original>Y</original>
    <variation>C</variation>
    <location>
        <position position="180"/>
    </location>
</feature>
<feature type="sequence conflict" description="In Ref. 1; CAH18871." evidence="4" ref="1">
    <original>G</original>
    <variation>A</variation>
    <location>
        <position position="216"/>
    </location>
</feature>
<feature type="sequence conflict" description="In Ref. 1; CAH18871." evidence="4" ref="1">
    <original>SG</original>
    <variation>A</variation>
    <location>
        <begin position="228"/>
        <end position="229"/>
    </location>
</feature>
<feature type="sequence conflict" description="In Ref. 1; CAH18871." evidence="4" ref="1">
    <original>G</original>
    <variation>S</variation>
    <location>
        <position position="232"/>
    </location>
</feature>
<feature type="sequence conflict" description="In Ref. 1; CAH18869." evidence="4" ref="1">
    <original>I</original>
    <variation>T</variation>
    <location>
        <position position="269"/>
    </location>
</feature>
<feature type="sequence conflict" description="In Ref. 1; CAH18871." evidence="4" ref="1">
    <original>ATN</original>
    <variation>TTY</variation>
    <location>
        <begin position="381"/>
        <end position="383"/>
    </location>
</feature>
<feature type="sequence conflict" description="In Ref. 1; CAH18871." evidence="4" ref="1">
    <original>P</original>
    <variation>A</variation>
    <location>
        <position position="441"/>
    </location>
</feature>
<feature type="sequence conflict" description="In Ref. 1; CAH18869." evidence="4" ref="1">
    <original>I</original>
    <variation>T</variation>
    <location>
        <position position="995"/>
    </location>
</feature>
<feature type="sequence conflict" description="In Ref. 1; CAH18871." evidence="4" ref="1">
    <original>L</original>
    <variation>P</variation>
    <location>
        <position position="1057"/>
    </location>
</feature>
<feature type="sequence conflict" description="In Ref. 1; CAH18869." evidence="4" ref="1">
    <original>F</original>
    <variation>L</variation>
    <location>
        <position position="1084"/>
    </location>
</feature>
<reference key="1">
    <citation type="journal article" date="2005" name="Biochimie">
        <title>Dehydration-induced tps gene transcripts from an anhydrobiotic nematode contain novel spliced leaders and encode atypical GT-20 family proteins.</title>
        <authorList>
            <person name="Goyal K."/>
            <person name="Browne J.A."/>
            <person name="Burnell A.M."/>
            <person name="Tunnacliffe A."/>
        </authorList>
    </citation>
    <scope>NUCLEOTIDE SEQUENCE [MRNA] (ISOFORMS A AND B)</scope>
</reference>
<organism>
    <name type="scientific">Aphelenchoides avenae</name>
    <name type="common">Mycophagous nematode worm</name>
    <name type="synonym">Aphelenchus avenae</name>
    <dbReference type="NCBI Taxonomy" id="70226"/>
    <lineage>
        <taxon>Eukaryota</taxon>
        <taxon>Metazoa</taxon>
        <taxon>Ecdysozoa</taxon>
        <taxon>Nematoda</taxon>
        <taxon>Chromadorea</taxon>
        <taxon>Rhabditida</taxon>
        <taxon>Tylenchina</taxon>
        <taxon>Tylenchomorpha</taxon>
        <taxon>Aphelenchoidea</taxon>
        <taxon>Aphelenchoididae</taxon>
        <taxon>Aphelenchoides</taxon>
    </lineage>
</organism>
<keyword id="KW-0025">Alternative splicing</keyword>
<keyword id="KW-0328">Glycosyltransferase</keyword>
<keyword id="KW-0808">Transferase</keyword>
<name>TPS2_APHAV</name>
<comment type="function">
    <text evidence="1">Catalyzes the production of trehalose from glucose-6-phosphate and UDP-alpha-D-glucose in a 2 step process.</text>
</comment>
<comment type="catalytic activity">
    <reaction>
        <text>D-glucose 6-phosphate + UDP-alpha-D-glucose = alpha,alpha-trehalose 6-phosphate + UDP + H(+)</text>
        <dbReference type="Rhea" id="RHEA:18889"/>
        <dbReference type="ChEBI" id="CHEBI:15378"/>
        <dbReference type="ChEBI" id="CHEBI:58223"/>
        <dbReference type="ChEBI" id="CHEBI:58429"/>
        <dbReference type="ChEBI" id="CHEBI:58885"/>
        <dbReference type="ChEBI" id="CHEBI:61548"/>
        <dbReference type="EC" id="2.4.1.15"/>
    </reaction>
</comment>
<comment type="alternative products">
    <event type="alternative splicing"/>
    <isoform>
        <id>Q5K2C1-1</id>
        <name>a</name>
        <sequence type="displayed"/>
    </isoform>
    <isoform>
        <id>Q5K2C1-2</id>
        <name>b</name>
        <sequence type="described" ref="VSP_038110 VSP_038111"/>
    </isoform>
</comment>
<comment type="similarity">
    <text evidence="4">In the N-terminal section; belongs to the glycosyltransferase 20 family.</text>
</comment>
<comment type="similarity">
    <text evidence="4">In the C-terminal section; belongs to the gob-1 trehalose phosphatase family.</text>
</comment>
<proteinExistence type="evidence at transcript level"/>